<evidence type="ECO:0000250" key="1"/>
<evidence type="ECO:0000255" key="2"/>
<evidence type="ECO:0000305" key="3"/>
<feature type="chain" id="PRO_0000270058" description="Aerobic glycerol-3-phosphate dehydrogenase">
    <location>
        <begin position="1"/>
        <end position="557"/>
    </location>
</feature>
<feature type="binding site" evidence="2">
    <location>
        <begin position="21"/>
        <end position="49"/>
    </location>
    <ligand>
        <name>FAD</name>
        <dbReference type="ChEBI" id="CHEBI:57692"/>
    </ligand>
</feature>
<accession>Q2YXR5</accession>
<sequence>MALSTFKREHIKKNLRNDEYDLVIIGGGITGAGIALDASERGMKVALVEMQDFAQGTSSRSTKLVHGGLRYLKQFQIGVVAETGKERAIVYENGPHVTTPEWMLLPMHKGGTFGKFSTSIGLGMYDRLAGVKKSERKKMLSKKETLAKEPLVKKEGLKGGGYYVEYRTDDARLTIEVMKRAAEKGAEIINYTKSEHFTYDKNQQVNGVKVIDKLTNENYTIKAKKVVNAAGPWVDDVRSGDYARNNKKLRLTKGVHVVIDQSKFPLGQAVYFDTEKDGRMIFAIPREGKAYVGTTDTFYDNIKSSPLTTQEDRDYLIDAINYMFPSVNVTDEDIESTWAGIRPLIYEEGKDPSEISRKDEIWEGKSGLLTIAGGKLTGYRHMAQDIVDLVSKRLKKDYGLTFSPCNTKGLAISGGDVGGSKNFDAFVEQKVDVAKGFGIDEDVARRLASKYGSNVDELFNIAQTSQYHDSKLPLEIYVELVYSIQQEMVYKPNDFLVRRSGKMYFNIKDVLDYKDSIIDIMADMLDYSPAQIEAYTEEVEQAIKEAQHGNNQPAVKE</sequence>
<organism>
    <name type="scientific">Staphylococcus aureus (strain bovine RF122 / ET3-1)</name>
    <dbReference type="NCBI Taxonomy" id="273036"/>
    <lineage>
        <taxon>Bacteria</taxon>
        <taxon>Bacillati</taxon>
        <taxon>Bacillota</taxon>
        <taxon>Bacilli</taxon>
        <taxon>Bacillales</taxon>
        <taxon>Staphylococcaceae</taxon>
        <taxon>Staphylococcus</taxon>
    </lineage>
</organism>
<proteinExistence type="inferred from homology"/>
<dbReference type="EC" id="1.1.5.3"/>
<dbReference type="EMBL" id="AJ938182">
    <property type="protein sequence ID" value="CAI80851.1"/>
    <property type="status" value="ALT_INIT"/>
    <property type="molecule type" value="Genomic_DNA"/>
</dbReference>
<dbReference type="RefSeq" id="WP_001218598.1">
    <property type="nucleotide sequence ID" value="NC_007622.1"/>
</dbReference>
<dbReference type="SMR" id="Q2YXR5"/>
<dbReference type="KEGG" id="sab:SAB1162"/>
<dbReference type="HOGENOM" id="CLU_015740_5_2_9"/>
<dbReference type="UniPathway" id="UPA00618">
    <property type="reaction ID" value="UER00674"/>
</dbReference>
<dbReference type="GO" id="GO:0005737">
    <property type="term" value="C:cytoplasm"/>
    <property type="evidence" value="ECO:0007669"/>
    <property type="project" value="UniProtKB-SubCell"/>
</dbReference>
<dbReference type="GO" id="GO:0004368">
    <property type="term" value="F:glycerol-3-phosphate dehydrogenase (quinone) activity"/>
    <property type="evidence" value="ECO:0007669"/>
    <property type="project" value="UniProtKB-EC"/>
</dbReference>
<dbReference type="GO" id="GO:0019563">
    <property type="term" value="P:glycerol catabolic process"/>
    <property type="evidence" value="ECO:0007669"/>
    <property type="project" value="UniProtKB-UniPathway"/>
</dbReference>
<dbReference type="GO" id="GO:0046168">
    <property type="term" value="P:glycerol-3-phosphate catabolic process"/>
    <property type="evidence" value="ECO:0007669"/>
    <property type="project" value="TreeGrafter"/>
</dbReference>
<dbReference type="Gene3D" id="1.10.8.870">
    <property type="entry name" value="Alpha-glycerophosphate oxidase, cap domain"/>
    <property type="match status" value="1"/>
</dbReference>
<dbReference type="Gene3D" id="3.30.9.10">
    <property type="entry name" value="D-Amino Acid Oxidase, subunit A, domain 2"/>
    <property type="match status" value="1"/>
</dbReference>
<dbReference type="Gene3D" id="3.50.50.60">
    <property type="entry name" value="FAD/NAD(P)-binding domain"/>
    <property type="match status" value="1"/>
</dbReference>
<dbReference type="InterPro" id="IPR031656">
    <property type="entry name" value="DAO_C"/>
</dbReference>
<dbReference type="InterPro" id="IPR038299">
    <property type="entry name" value="DAO_C_sf"/>
</dbReference>
<dbReference type="InterPro" id="IPR006076">
    <property type="entry name" value="FAD-dep_OxRdtase"/>
</dbReference>
<dbReference type="InterPro" id="IPR036188">
    <property type="entry name" value="FAD/NAD-bd_sf"/>
</dbReference>
<dbReference type="InterPro" id="IPR000447">
    <property type="entry name" value="G3P_DH_FAD-dep"/>
</dbReference>
<dbReference type="PANTHER" id="PTHR11985:SF35">
    <property type="entry name" value="ANAEROBIC GLYCEROL-3-PHOSPHATE DEHYDROGENASE SUBUNIT A"/>
    <property type="match status" value="1"/>
</dbReference>
<dbReference type="PANTHER" id="PTHR11985">
    <property type="entry name" value="GLYCEROL-3-PHOSPHATE DEHYDROGENASE"/>
    <property type="match status" value="1"/>
</dbReference>
<dbReference type="Pfam" id="PF01266">
    <property type="entry name" value="DAO"/>
    <property type="match status" value="1"/>
</dbReference>
<dbReference type="Pfam" id="PF16901">
    <property type="entry name" value="DAO_C"/>
    <property type="match status" value="1"/>
</dbReference>
<dbReference type="PRINTS" id="PR01001">
    <property type="entry name" value="FADG3PDH"/>
</dbReference>
<dbReference type="SUPFAM" id="SSF54373">
    <property type="entry name" value="FAD-linked reductases, C-terminal domain"/>
    <property type="match status" value="1"/>
</dbReference>
<dbReference type="SUPFAM" id="SSF51905">
    <property type="entry name" value="FAD/NAD(P)-binding domain"/>
    <property type="match status" value="1"/>
</dbReference>
<dbReference type="PROSITE" id="PS00977">
    <property type="entry name" value="FAD_G3PDH_1"/>
    <property type="match status" value="1"/>
</dbReference>
<dbReference type="PROSITE" id="PS00978">
    <property type="entry name" value="FAD_G3PDH_2"/>
    <property type="match status" value="1"/>
</dbReference>
<name>GLPD_STAAB</name>
<keyword id="KW-0963">Cytoplasm</keyword>
<keyword id="KW-0274">FAD</keyword>
<keyword id="KW-0285">Flavoprotein</keyword>
<keyword id="KW-0319">Glycerol metabolism</keyword>
<keyword id="KW-0560">Oxidoreductase</keyword>
<reference key="1">
    <citation type="journal article" date="2007" name="PLoS ONE">
        <title>Molecular correlates of host specialization in Staphylococcus aureus.</title>
        <authorList>
            <person name="Herron-Olson L."/>
            <person name="Fitzgerald J.R."/>
            <person name="Musser J.M."/>
            <person name="Kapur V."/>
        </authorList>
    </citation>
    <scope>NUCLEOTIDE SEQUENCE [LARGE SCALE GENOMIC DNA]</scope>
    <source>
        <strain>bovine RF122 / ET3-1</strain>
    </source>
</reference>
<protein>
    <recommendedName>
        <fullName>Aerobic glycerol-3-phosphate dehydrogenase</fullName>
        <ecNumber>1.1.5.3</ecNumber>
    </recommendedName>
</protein>
<gene>
    <name type="primary">glpD</name>
    <name type="ordered locus">SAB1162</name>
</gene>
<comment type="catalytic activity">
    <reaction>
        <text>a quinone + sn-glycerol 3-phosphate = dihydroxyacetone phosphate + a quinol</text>
        <dbReference type="Rhea" id="RHEA:18977"/>
        <dbReference type="ChEBI" id="CHEBI:24646"/>
        <dbReference type="ChEBI" id="CHEBI:57597"/>
        <dbReference type="ChEBI" id="CHEBI:57642"/>
        <dbReference type="ChEBI" id="CHEBI:132124"/>
        <dbReference type="EC" id="1.1.5.3"/>
    </reaction>
</comment>
<comment type="cofactor">
    <cofactor evidence="1">
        <name>FAD</name>
        <dbReference type="ChEBI" id="CHEBI:57692"/>
    </cofactor>
</comment>
<comment type="pathway">
    <text>Polyol metabolism; glycerol degradation via glycerol kinase pathway; glycerone phosphate from sn-glycerol 3-phosphate (aerobic route): step 1/1.</text>
</comment>
<comment type="subcellular location">
    <subcellularLocation>
        <location evidence="1">Cytoplasm</location>
    </subcellularLocation>
</comment>
<comment type="similarity">
    <text evidence="3">Belongs to the FAD-dependent glycerol-3-phosphate dehydrogenase family.</text>
</comment>
<comment type="sequence caution" evidence="3">
    <conflict type="erroneous initiation">
        <sequence resource="EMBL-CDS" id="CAI80851"/>
    </conflict>
</comment>